<organism>
    <name type="scientific">Arabidopsis thaliana</name>
    <name type="common">Mouse-ear cress</name>
    <dbReference type="NCBI Taxonomy" id="3702"/>
    <lineage>
        <taxon>Eukaryota</taxon>
        <taxon>Viridiplantae</taxon>
        <taxon>Streptophyta</taxon>
        <taxon>Embryophyta</taxon>
        <taxon>Tracheophyta</taxon>
        <taxon>Spermatophyta</taxon>
        <taxon>Magnoliopsida</taxon>
        <taxon>eudicotyledons</taxon>
        <taxon>Gunneridae</taxon>
        <taxon>Pentapetalae</taxon>
        <taxon>rosids</taxon>
        <taxon>malvids</taxon>
        <taxon>Brassicales</taxon>
        <taxon>Brassicaceae</taxon>
        <taxon>Camelineae</taxon>
        <taxon>Arabidopsis</taxon>
    </lineage>
</organism>
<evidence type="ECO:0000250" key="1"/>
<evidence type="ECO:0000250" key="2">
    <source>
        <dbReference type="UniProtKB" id="Q9LPG6"/>
    </source>
</evidence>
<evidence type="ECO:0000255" key="3"/>
<evidence type="ECO:0000269" key="4">
    <source>
    </source>
</evidence>
<evidence type="ECO:0000269" key="5">
    <source>
    </source>
</evidence>
<evidence type="ECO:0000269" key="6">
    <source>
    </source>
</evidence>
<evidence type="ECO:0000269" key="7">
    <source>
    </source>
</evidence>
<evidence type="ECO:0000269" key="8">
    <source>
    </source>
</evidence>
<evidence type="ECO:0000269" key="9">
    <source>
    </source>
</evidence>
<evidence type="ECO:0000269" key="10">
    <source>
    </source>
</evidence>
<evidence type="ECO:0000269" key="11">
    <source>
    </source>
</evidence>
<evidence type="ECO:0000303" key="12">
    <source>
    </source>
</evidence>
<evidence type="ECO:0000303" key="13">
    <source>
    </source>
</evidence>
<evidence type="ECO:0000305" key="14"/>
<evidence type="ECO:0000305" key="15">
    <source>
    </source>
</evidence>
<name>RHM1_ARATH</name>
<reference key="1">
    <citation type="journal article" date="2000" name="Nature">
        <title>Sequence and analysis of chromosome 1 of the plant Arabidopsis thaliana.</title>
        <authorList>
            <person name="Theologis A."/>
            <person name="Ecker J.R."/>
            <person name="Palm C.J."/>
            <person name="Federspiel N.A."/>
            <person name="Kaul S."/>
            <person name="White O."/>
            <person name="Alonso J."/>
            <person name="Altafi H."/>
            <person name="Araujo R."/>
            <person name="Bowman C.L."/>
            <person name="Brooks S.Y."/>
            <person name="Buehler E."/>
            <person name="Chan A."/>
            <person name="Chao Q."/>
            <person name="Chen H."/>
            <person name="Cheuk R.F."/>
            <person name="Chin C.W."/>
            <person name="Chung M.K."/>
            <person name="Conn L."/>
            <person name="Conway A.B."/>
            <person name="Conway A.R."/>
            <person name="Creasy T.H."/>
            <person name="Dewar K."/>
            <person name="Dunn P."/>
            <person name="Etgu P."/>
            <person name="Feldblyum T.V."/>
            <person name="Feng J.-D."/>
            <person name="Fong B."/>
            <person name="Fujii C.Y."/>
            <person name="Gill J.E."/>
            <person name="Goldsmith A.D."/>
            <person name="Haas B."/>
            <person name="Hansen N.F."/>
            <person name="Hughes B."/>
            <person name="Huizar L."/>
            <person name="Hunter J.L."/>
            <person name="Jenkins J."/>
            <person name="Johnson-Hopson C."/>
            <person name="Khan S."/>
            <person name="Khaykin E."/>
            <person name="Kim C.J."/>
            <person name="Koo H.L."/>
            <person name="Kremenetskaia I."/>
            <person name="Kurtz D.B."/>
            <person name="Kwan A."/>
            <person name="Lam B."/>
            <person name="Langin-Hooper S."/>
            <person name="Lee A."/>
            <person name="Lee J.M."/>
            <person name="Lenz C.A."/>
            <person name="Li J.H."/>
            <person name="Li Y.-P."/>
            <person name="Lin X."/>
            <person name="Liu S.X."/>
            <person name="Liu Z.A."/>
            <person name="Luros J.S."/>
            <person name="Maiti R."/>
            <person name="Marziali A."/>
            <person name="Militscher J."/>
            <person name="Miranda M."/>
            <person name="Nguyen M."/>
            <person name="Nierman W.C."/>
            <person name="Osborne B.I."/>
            <person name="Pai G."/>
            <person name="Peterson J."/>
            <person name="Pham P.K."/>
            <person name="Rizzo M."/>
            <person name="Rooney T."/>
            <person name="Rowley D."/>
            <person name="Sakano H."/>
            <person name="Salzberg S.L."/>
            <person name="Schwartz J.R."/>
            <person name="Shinn P."/>
            <person name="Southwick A.M."/>
            <person name="Sun H."/>
            <person name="Tallon L.J."/>
            <person name="Tambunga G."/>
            <person name="Toriumi M.J."/>
            <person name="Town C.D."/>
            <person name="Utterback T."/>
            <person name="Van Aken S."/>
            <person name="Vaysberg M."/>
            <person name="Vysotskaia V.S."/>
            <person name="Walker M."/>
            <person name="Wu D."/>
            <person name="Yu G."/>
            <person name="Fraser C.M."/>
            <person name="Venter J.C."/>
            <person name="Davis R.W."/>
        </authorList>
    </citation>
    <scope>NUCLEOTIDE SEQUENCE [LARGE SCALE GENOMIC DNA]</scope>
    <source>
        <strain>cv. Columbia</strain>
    </source>
</reference>
<reference key="2">
    <citation type="journal article" date="2017" name="Plant J.">
        <title>Araport11: a complete reannotation of the Arabidopsis thaliana reference genome.</title>
        <authorList>
            <person name="Cheng C.Y."/>
            <person name="Krishnakumar V."/>
            <person name="Chan A.P."/>
            <person name="Thibaud-Nissen F."/>
            <person name="Schobel S."/>
            <person name="Town C.D."/>
        </authorList>
    </citation>
    <scope>GENOME REANNOTATION</scope>
    <source>
        <strain>cv. Columbia</strain>
    </source>
</reference>
<reference key="3">
    <citation type="journal article" date="2003" name="Science">
        <title>Empirical analysis of transcriptional activity in the Arabidopsis genome.</title>
        <authorList>
            <person name="Yamada K."/>
            <person name="Lim J."/>
            <person name="Dale J.M."/>
            <person name="Chen H."/>
            <person name="Shinn P."/>
            <person name="Palm C.J."/>
            <person name="Southwick A.M."/>
            <person name="Wu H.C."/>
            <person name="Kim C.J."/>
            <person name="Nguyen M."/>
            <person name="Pham P.K."/>
            <person name="Cheuk R.F."/>
            <person name="Karlin-Newmann G."/>
            <person name="Liu S.X."/>
            <person name="Lam B."/>
            <person name="Sakano H."/>
            <person name="Wu T."/>
            <person name="Yu G."/>
            <person name="Miranda M."/>
            <person name="Quach H.L."/>
            <person name="Tripp M."/>
            <person name="Chang C.H."/>
            <person name="Lee J.M."/>
            <person name="Toriumi M.J."/>
            <person name="Chan M.M."/>
            <person name="Tang C.C."/>
            <person name="Onodera C.S."/>
            <person name="Deng J.M."/>
            <person name="Akiyama K."/>
            <person name="Ansari Y."/>
            <person name="Arakawa T."/>
            <person name="Banh J."/>
            <person name="Banno F."/>
            <person name="Bowser L."/>
            <person name="Brooks S.Y."/>
            <person name="Carninci P."/>
            <person name="Chao Q."/>
            <person name="Choy N."/>
            <person name="Enju A."/>
            <person name="Goldsmith A.D."/>
            <person name="Gurjal M."/>
            <person name="Hansen N.F."/>
            <person name="Hayashizaki Y."/>
            <person name="Johnson-Hopson C."/>
            <person name="Hsuan V.W."/>
            <person name="Iida K."/>
            <person name="Karnes M."/>
            <person name="Khan S."/>
            <person name="Koesema E."/>
            <person name="Ishida J."/>
            <person name="Jiang P.X."/>
            <person name="Jones T."/>
            <person name="Kawai J."/>
            <person name="Kamiya A."/>
            <person name="Meyers C."/>
            <person name="Nakajima M."/>
            <person name="Narusaka M."/>
            <person name="Seki M."/>
            <person name="Sakurai T."/>
            <person name="Satou M."/>
            <person name="Tamse R."/>
            <person name="Vaysberg M."/>
            <person name="Wallender E.K."/>
            <person name="Wong C."/>
            <person name="Yamamura Y."/>
            <person name="Yuan S."/>
            <person name="Shinozaki K."/>
            <person name="Davis R.W."/>
            <person name="Theologis A."/>
            <person name="Ecker J.R."/>
        </authorList>
    </citation>
    <scope>NUCLEOTIDE SEQUENCE [LARGE SCALE MRNA]</scope>
    <source>
        <strain>cv. Columbia</strain>
    </source>
</reference>
<reference key="4">
    <citation type="journal article" date="2001" name="Plant Mol. Biol.">
        <title>Molecular genetics of nucleotide sugar interconversion pathways in plants.</title>
        <authorList>
            <person name="Reiter W.-D."/>
            <person name="Vanzin G.F."/>
        </authorList>
    </citation>
    <scope>IDENTIFICATION</scope>
</reference>
<reference key="5">
    <citation type="journal article" date="2004" name="Plant Physiol.">
        <title>RHM2 is involved in mucilage pectin synthesis and is required for the development of the seed coat in Arabidopsis.</title>
        <authorList>
            <person name="Usadel B."/>
            <person name="Kuschinsky A.M."/>
            <person name="Rosso M.G."/>
            <person name="Eckermann N."/>
            <person name="Pauly M."/>
        </authorList>
    </citation>
    <scope>FUNCTION</scope>
    <scope>TISSUE SPECIFICITY</scope>
</reference>
<reference key="6">
    <citation type="journal article" date="2004" name="Plant Physiol.">
        <title>MUCILAGE-MODIFIED4 encodes a putative pectin biosynthetic enzyme developmentally regulated by APETALA2, TRANSPARENT TESTA GLABRA1, and GLABRA2 in the Arabidopsis seed coat.</title>
        <authorList>
            <person name="Western T.L."/>
            <person name="Young D.S."/>
            <person name="Dean G.H."/>
            <person name="Tan W.L."/>
            <person name="Samuels A.L."/>
            <person name="Haughn G.W."/>
        </authorList>
    </citation>
    <scope>TISSUE SPECIFICITY</scope>
    <source>
        <strain>cv. Col-2</strain>
    </source>
</reference>
<reference key="7">
    <citation type="journal article" date="2004" name="Curr. Opin. Plant Biol.">
        <title>Nucleotide sugar interconversions and cell wall biosynthesis: how to bring the inside to the outside.</title>
        <authorList>
            <person name="Seifert G.J."/>
        </authorList>
    </citation>
    <scope>REVIEW</scope>
    <scope>NOMENCLATURE</scope>
</reference>
<reference key="8">
    <citation type="journal article" date="2006" name="Plant Cell">
        <title>The Arabidopsis root hair cell wall formation mutant lrx1 is suppressed by mutations in the RHM1 gene encoding a UDP-L-rhamnose synthase.</title>
        <authorList>
            <person name="Diet A."/>
            <person name="Link B."/>
            <person name="Seifert G.J."/>
            <person name="Schellenberg B."/>
            <person name="Wagner U."/>
            <person name="Pauly M."/>
            <person name="Reiter W.D."/>
            <person name="Ringli C."/>
        </authorList>
    </citation>
    <scope>TISSUE SPECIFICITY</scope>
    <scope>MUTAGENESIS OF ARG-283</scope>
</reference>
<reference key="9">
    <citation type="journal article" date="2007" name="J. Biol. Chem.">
        <title>Functional analysis of Arabidopsis thaliana RHM2/MUM4, a multidomain protein involved in UDP-D-glucose to UDP-L-rhamnose conversion.</title>
        <authorList>
            <person name="Oka T."/>
            <person name="Nemoto T."/>
            <person name="Jigami Y."/>
        </authorList>
    </citation>
    <scope>FUNCTION</scope>
</reference>
<reference key="10">
    <citation type="journal article" date="2008" name="Plant Cell">
        <title>The modified flavonol glycosylation profile in the Arabidopsis rol1 mutants results in alterations in plant growth and cell shape formation.</title>
        <authorList>
            <person name="Ringli C."/>
            <person name="Bigler L."/>
            <person name="Kuhn B.M."/>
            <person name="Leiber R.M."/>
            <person name="Diet A."/>
            <person name="Santelia D."/>
            <person name="Frey B."/>
            <person name="Pollmann S."/>
            <person name="Klein M."/>
        </authorList>
    </citation>
    <scope>DISRUPTION PHENOTYPE</scope>
    <scope>MUTAGENESIS OF ARG-283</scope>
</reference>
<reference key="11">
    <citation type="journal article" date="2008" name="Plant Cell">
        <title>Comprehensive flavonol profiling and transcriptome coexpression analysis leading to decoding gene-metabolite correlations in Arabidopsis.</title>
        <authorList>
            <person name="Yonekura-Sakakibara K."/>
            <person name="Tohge T."/>
            <person name="Matsuda F."/>
            <person name="Nakabayashi R."/>
            <person name="Takayama H."/>
            <person name="Niida R."/>
            <person name="Watanabe-Takahashi A."/>
            <person name="Inoue E."/>
            <person name="Saito K."/>
        </authorList>
    </citation>
    <scope>FUNCTION</scope>
    <scope>MUTAGENESIS OF ARG-283</scope>
</reference>
<reference key="12">
    <citation type="journal article" date="2009" name="Plant Physiol. Biochem.">
        <title>Overexpression of a cytosol-localized rhamnose biosynthesis protein encoded by Arabidopsis RHM1 gene increases rhamnose content in cell wall.</title>
        <authorList>
            <person name="Wang J."/>
            <person name="Ji Q."/>
            <person name="Jiang L."/>
            <person name="Shen S."/>
            <person name="Fan Y."/>
            <person name="Zhang C."/>
        </authorList>
    </citation>
    <scope>FUNCTION</scope>
    <scope>SUBCELLULAR LOCATION</scope>
    <scope>TISSUE SPECIFICITY</scope>
</reference>
<reference key="13">
    <citation type="journal article" date="2011" name="Plant Physiol.">
        <title>Flavonols accumulate asymmetrically and affect auxin transport in Arabidopsis.</title>
        <authorList>
            <person name="Kuhn B.M."/>
            <person name="Geisler M."/>
            <person name="Bigler L."/>
            <person name="Ringli C."/>
        </authorList>
    </citation>
    <scope>SUBCELLULAR LOCATION</scope>
    <scope>TISSUE SPECIFICITY</scope>
</reference>
<keyword id="KW-0961">Cell wall biogenesis/degradation</keyword>
<keyword id="KW-0963">Cytoplasm</keyword>
<keyword id="KW-0413">Isomerase</keyword>
<keyword id="KW-0456">Lyase</keyword>
<keyword id="KW-0511">Multifunctional enzyme</keyword>
<keyword id="KW-0520">NAD</keyword>
<keyword id="KW-0521">NADP</keyword>
<keyword id="KW-0560">Oxidoreductase</keyword>
<keyword id="KW-1185">Reference proteome</keyword>
<sequence>MASYTPKNILITGAAGFIASHVANRLIRSYPDYKIVVLDKLDYCSNLKNLNPSKHSPNFKFVKGDIASADLVNHLLITEGIDTIMHFAAQTHVDNSFGNSFEFTKNNIYGTHVLLEACKVTGQIRRFIHVSTDEVYGETDEDALVGNHEASQLLPTNPYSATKAGAEMLVMAYGRSYGLPVITTRGNNVYGPNQFPEKLIPKFILLAMRGQVLPIHGDGSNVRSYLYCEDVAEAFEVVLHKGEVGHVYNIGTKKERRVNDVAKDICKLFNMDPEANIKFVDNRPFNDQRYFLDDQKLKKLGWSERTTWEEGLKKTMDWYTQNPEWWGDVSGALLPHPRMLMMPGGRHFDGSEDNSLAATLSEKPSQTHMVVPSQRSNGTPQKPSLKFLIYGKTGWIGGLLGKICDKQGIAYEYGKGRLEDRSSLLQDIQSVKPTHVFNSAGVTGRPNVDWCESHKTETIRANVAGTLTLADVCREHGLLMMNFATGCIFEYDDKHPEGSGIGFKEEDTPNFTGSFYSKTKAMVEELLKEYDNVCTLRVRMPISSDLNNPRNFITKISRYNKVVNIPNSMTVLDELLPISIEMAKRNLKGIWNFTNPGVVSHNEILEMYRDYINPEFKWANFTLEEQAKVIVAPRSNNEMDASKLKKEFPELLSIKESLIKYAYGPNKKT</sequence>
<comment type="function">
    <text evidence="2 4 7 9 10">Trifunctional enzyme involved in UDP-beta-L-rhamnose biosynthesis, a precursor of the primary cell wall components rhamnogalacturonan I (RG-I) and rhamnogalacturonan II (RG-II) (PubMed:14671019, PubMed:17190829, PubMed:19056285). Plays a major role in supplying UDP-rhamnose for flavonol biosynthesis (PubMed:18757557). Catalyzes the dehydration of UDP-glucose to form UDP-4-dehydro-6-deoxy-D-glucose followed by the epimerization of the C3' and C5' positions of UDP-4-dehydro-6-deoxy-D-glucose to form UDP-4-keto-beta-L-rhamnose and the reduction of UDP-4-keto-beta-L-rhamnose to yield UDP-beta-L-rhamnose (By similarity).</text>
</comment>
<comment type="catalytic activity">
    <reaction evidence="2">
        <text>UDP-alpha-D-glucose = UDP-4-dehydro-6-deoxy-alpha-D-glucose + H2O</text>
        <dbReference type="Rhea" id="RHEA:21500"/>
        <dbReference type="ChEBI" id="CHEBI:15377"/>
        <dbReference type="ChEBI" id="CHEBI:58885"/>
        <dbReference type="ChEBI" id="CHEBI:85329"/>
        <dbReference type="EC" id="4.2.1.76"/>
    </reaction>
</comment>
<comment type="cofactor">
    <cofactor evidence="2">
        <name>NAD(+)</name>
        <dbReference type="ChEBI" id="CHEBI:57540"/>
    </cofactor>
</comment>
<comment type="cofactor">
    <cofactor evidence="2">
        <name>NADP(+)</name>
        <dbReference type="ChEBI" id="CHEBI:58349"/>
    </cofactor>
</comment>
<comment type="pathway">
    <text evidence="14">Carbohydrate biosynthesis.</text>
</comment>
<comment type="subcellular location">
    <subcellularLocation>
        <location evidence="10 11">Cytoplasm</location>
        <location evidence="10 11">Cytosol</location>
    </subcellularLocation>
</comment>
<comment type="tissue specificity">
    <text evidence="4 5 6 10 11">Expressed in roots, stems, leaves, seedlings, inflorescence tips, and siliques. Detected in the adaxial side of cotyledons, in the emerging leaves and in trichomes. Also detected in the root tip, more precisely in the epidermal cells in the meristematic and elongation zone.</text>
</comment>
<comment type="domain">
    <text evidence="2">The dehydratase activity is contained in the N-terminal region while the epimerase and reductase activities are in the C-terminal region.</text>
</comment>
<comment type="disruption phenotype">
    <text evidence="8">Hyponastic growth, aberrant pavement cell and stomatal morphology in cotyledons, and defective trichome formation.</text>
</comment>
<comment type="miscellaneous">
    <text evidence="8 11">The increased accumulation of auxin in rol1-2 seedlings appears to be caused by a flavonol-induced modification of auxin transport (PubMed:18567791, PubMed:21502189). In bacteria, TDP-L-rhamnose is formed by the successive action of three different enzymes on TDP-D-glucose. In plants, on the other hand, a single polypeptide probably catalyzes all three reactions that lead to the conversion of UDP-D-glucose to UDP-L-rhamnose.</text>
</comment>
<comment type="similarity">
    <text evidence="14">In the N-terminal section; belongs to the NAD(P)-dependent epimerase/dehydratase family. dTDP-glucose dehydratase subfamily.</text>
</comment>
<comment type="similarity">
    <text evidence="14">In the C-terminal section; belongs to the dTDP-4-dehydrorhamnose reductase family.</text>
</comment>
<proteinExistence type="evidence at protein level"/>
<feature type="chain" id="PRO_0000183252" description="Trifunctional UDP-glucose 4,6-dehydratase/UDP-4-keto-6-deoxy-D-glucose 3,5-epimerase/UDP-4-keto-L-rhamnose-reductase RHM1">
    <location>
        <begin position="1"/>
        <end position="669"/>
    </location>
</feature>
<feature type="active site" description="Proton donor" evidence="1">
    <location>
        <position position="133"/>
    </location>
</feature>
<feature type="active site" description="Proton acceptor" evidence="1">
    <location>
        <position position="134"/>
    </location>
</feature>
<feature type="active site" description="Proton acceptor" evidence="1">
    <location>
        <position position="159"/>
    </location>
</feature>
<feature type="binding site" evidence="3">
    <location>
        <begin position="13"/>
        <end position="19"/>
    </location>
    <ligand>
        <name>NAD(+)</name>
        <dbReference type="ChEBI" id="CHEBI:57540"/>
    </ligand>
</feature>
<feature type="binding site" evidence="1">
    <location>
        <position position="132"/>
    </location>
    <ligand>
        <name>substrate</name>
    </ligand>
</feature>
<feature type="binding site" evidence="2">
    <location>
        <begin position="391"/>
        <end position="397"/>
    </location>
    <ligand>
        <name>NADP(+)</name>
        <dbReference type="ChEBI" id="CHEBI:58349"/>
    </ligand>
</feature>
<feature type="mutagenesis site" description="In rol1-2; Abolishes dehydratase activity in vitro (PubMed:16766693). Induces aberrant accumulation of flavonols leading to alterations in plant growth and cell shape formation (PubMed:18567791, PubMed:18757557)." evidence="6 8 9">
    <original>R</original>
    <variation>K</variation>
    <location>
        <position position="283"/>
    </location>
</feature>
<gene>
    <name evidence="12" type="primary">RHM1</name>
    <name evidence="13" type="synonym">ROL1</name>
    <name type="ordered locus">At1g78570</name>
    <name type="ORF">T30F21.10</name>
</gene>
<protein>
    <recommendedName>
        <fullName evidence="15">Trifunctional UDP-glucose 4,6-dehydratase/UDP-4-keto-6-deoxy-D-glucose 3,5-epimerase/UDP-4-keto-L-rhamnose-reductase RHM1</fullName>
    </recommendedName>
    <alternativeName>
        <fullName evidence="13">Protein REPRESSOR OF LRX1 1</fullName>
    </alternativeName>
    <alternativeName>
        <fullName>Rhamnose biosynthetic enzyme 1</fullName>
        <shortName>AtRHM1</shortName>
    </alternativeName>
    <domain>
        <recommendedName>
            <fullName evidence="15">UDP-glucose 4,6-dehydratase</fullName>
            <ecNumber evidence="15">4.2.1.76</ecNumber>
        </recommendedName>
    </domain>
    <domain>
        <recommendedName>
            <fullName evidence="15">UDP-4-keto-6-deoxy-D-glucose 3,5-epimerase/UDP-4-keto-L-rhamnose 4-keto-reductase</fullName>
            <ecNumber evidence="15">1.1.1.-</ecNumber>
            <ecNumber evidence="15">5.1.3.-</ecNumber>
        </recommendedName>
    </domain>
</protein>
<accession>Q9SYM5</accession>
<dbReference type="EC" id="4.2.1.76" evidence="15"/>
<dbReference type="EC" id="1.1.1.-" evidence="15"/>
<dbReference type="EC" id="5.1.3.-" evidence="15"/>
<dbReference type="EMBL" id="AC007260">
    <property type="protein sequence ID" value="AAD30579.1"/>
    <property type="molecule type" value="Genomic_DNA"/>
</dbReference>
<dbReference type="EMBL" id="CP002684">
    <property type="protein sequence ID" value="AEE36122.1"/>
    <property type="molecule type" value="Genomic_DNA"/>
</dbReference>
<dbReference type="EMBL" id="AY042833">
    <property type="protein sequence ID" value="AAK68773.1"/>
    <property type="molecule type" value="mRNA"/>
</dbReference>
<dbReference type="EMBL" id="AY081471">
    <property type="protein sequence ID" value="AAM10033.1"/>
    <property type="molecule type" value="mRNA"/>
</dbReference>
<dbReference type="PIR" id="C96814">
    <property type="entry name" value="C96814"/>
</dbReference>
<dbReference type="RefSeq" id="NP_177978.1">
    <property type="nucleotide sequence ID" value="NM_106504.4"/>
</dbReference>
<dbReference type="SMR" id="Q9SYM5"/>
<dbReference type="BioGRID" id="29412">
    <property type="interactions" value="7"/>
</dbReference>
<dbReference type="FunCoup" id="Q9SYM5">
    <property type="interactions" value="288"/>
</dbReference>
<dbReference type="IntAct" id="Q9SYM5">
    <property type="interactions" value="2"/>
</dbReference>
<dbReference type="STRING" id="3702.Q9SYM5"/>
<dbReference type="iPTMnet" id="Q9SYM5"/>
<dbReference type="PaxDb" id="3702-AT1G78570.1"/>
<dbReference type="ProteomicsDB" id="236182"/>
<dbReference type="EnsemblPlants" id="AT1G78570.1">
    <property type="protein sequence ID" value="AT1G78570.1"/>
    <property type="gene ID" value="AT1G78570"/>
</dbReference>
<dbReference type="GeneID" id="844193"/>
<dbReference type="Gramene" id="AT1G78570.1">
    <property type="protein sequence ID" value="AT1G78570.1"/>
    <property type="gene ID" value="AT1G78570"/>
</dbReference>
<dbReference type="KEGG" id="ath:AT1G78570"/>
<dbReference type="Araport" id="AT1G78570"/>
<dbReference type="TAIR" id="AT1G78570">
    <property type="gene designation" value="RHM1"/>
</dbReference>
<dbReference type="eggNOG" id="KOG0747">
    <property type="taxonomic scope" value="Eukaryota"/>
</dbReference>
<dbReference type="HOGENOM" id="CLU_026813_1_0_1"/>
<dbReference type="InParanoid" id="Q9SYM5"/>
<dbReference type="OMA" id="TYFEMNV"/>
<dbReference type="OrthoDB" id="16464at2759"/>
<dbReference type="PhylomeDB" id="Q9SYM5"/>
<dbReference type="BioCyc" id="ARA:AT1G78570-MONOMER"/>
<dbReference type="BioCyc" id="MetaCyc:AT1G78570-MONOMER"/>
<dbReference type="PRO" id="PR:Q9SYM5"/>
<dbReference type="Proteomes" id="UP000006548">
    <property type="component" value="Chromosome 1"/>
</dbReference>
<dbReference type="ExpressionAtlas" id="Q9SYM5">
    <property type="expression patterns" value="baseline and differential"/>
</dbReference>
<dbReference type="GO" id="GO:0005829">
    <property type="term" value="C:cytosol"/>
    <property type="evidence" value="ECO:0007669"/>
    <property type="project" value="UniProtKB-SubCell"/>
</dbReference>
<dbReference type="GO" id="GO:0005739">
    <property type="term" value="C:mitochondrion"/>
    <property type="evidence" value="ECO:0007005"/>
    <property type="project" value="TAIR"/>
</dbReference>
<dbReference type="GO" id="GO:0009506">
    <property type="term" value="C:plasmodesma"/>
    <property type="evidence" value="ECO:0007005"/>
    <property type="project" value="TAIR"/>
</dbReference>
<dbReference type="GO" id="GO:0008460">
    <property type="term" value="F:dTDP-glucose 4,6-dehydratase activity"/>
    <property type="evidence" value="ECO:0007669"/>
    <property type="project" value="InterPro"/>
</dbReference>
<dbReference type="GO" id="GO:0016853">
    <property type="term" value="F:isomerase activity"/>
    <property type="evidence" value="ECO:0007669"/>
    <property type="project" value="UniProtKB-KW"/>
</dbReference>
<dbReference type="GO" id="GO:0016491">
    <property type="term" value="F:oxidoreductase activity"/>
    <property type="evidence" value="ECO:0007669"/>
    <property type="project" value="UniProtKB-KW"/>
</dbReference>
<dbReference type="GO" id="GO:0050377">
    <property type="term" value="F:UDP-glucose 4,6-dehydratase activity"/>
    <property type="evidence" value="ECO:0000314"/>
    <property type="project" value="TAIR"/>
</dbReference>
<dbReference type="GO" id="GO:0010280">
    <property type="term" value="F:UDP-L-rhamnose synthase activity"/>
    <property type="evidence" value="ECO:0000314"/>
    <property type="project" value="TAIR"/>
</dbReference>
<dbReference type="GO" id="GO:0010315">
    <property type="term" value="P:auxin export across the plasma membrane"/>
    <property type="evidence" value="ECO:0000315"/>
    <property type="project" value="UniProtKB"/>
</dbReference>
<dbReference type="GO" id="GO:0030154">
    <property type="term" value="P:cell differentiation"/>
    <property type="evidence" value="ECO:0000315"/>
    <property type="project" value="UniProtKB"/>
</dbReference>
<dbReference type="GO" id="GO:0071555">
    <property type="term" value="P:cell wall organization"/>
    <property type="evidence" value="ECO:0007669"/>
    <property type="project" value="UniProtKB-KW"/>
</dbReference>
<dbReference type="GO" id="GO:0051555">
    <property type="term" value="P:flavonol biosynthetic process"/>
    <property type="evidence" value="ECO:0000315"/>
    <property type="project" value="UniProtKB"/>
</dbReference>
<dbReference type="GO" id="GO:0042127">
    <property type="term" value="P:regulation of cell population proliferation"/>
    <property type="evidence" value="ECO:0000315"/>
    <property type="project" value="UniProtKB"/>
</dbReference>
<dbReference type="GO" id="GO:0010253">
    <property type="term" value="P:UDP-rhamnose biosynthetic process"/>
    <property type="evidence" value="ECO:0000314"/>
    <property type="project" value="TAIR"/>
</dbReference>
<dbReference type="CDD" id="cd05246">
    <property type="entry name" value="dTDP_GD_SDR_e"/>
    <property type="match status" value="1"/>
</dbReference>
<dbReference type="CDD" id="cd05254">
    <property type="entry name" value="dTDP_HR_like_SDR_e"/>
    <property type="match status" value="1"/>
</dbReference>
<dbReference type="FunFam" id="3.40.50.720:FF:000236">
    <property type="entry name" value="Bifunctional dTDP-4-dehydrorhamnose 3,5-epimerase/dTDP-4-dehydrorhamnose reductase"/>
    <property type="match status" value="1"/>
</dbReference>
<dbReference type="FunFam" id="3.40.50.720:FF:000304">
    <property type="entry name" value="UDP-glucose 4,6-dehydratase"/>
    <property type="match status" value="1"/>
</dbReference>
<dbReference type="Gene3D" id="3.40.50.720">
    <property type="entry name" value="NAD(P)-binding Rossmann-like Domain"/>
    <property type="match status" value="2"/>
</dbReference>
<dbReference type="Gene3D" id="3.90.25.10">
    <property type="entry name" value="UDP-galactose 4-epimerase, domain 1"/>
    <property type="match status" value="1"/>
</dbReference>
<dbReference type="InterPro" id="IPR005888">
    <property type="entry name" value="dTDP_Gluc_deHydtase"/>
</dbReference>
<dbReference type="InterPro" id="IPR016040">
    <property type="entry name" value="NAD(P)-bd_dom"/>
</dbReference>
<dbReference type="InterPro" id="IPR036291">
    <property type="entry name" value="NAD(P)-bd_dom_sf"/>
</dbReference>
<dbReference type="InterPro" id="IPR029903">
    <property type="entry name" value="RmlD-like-bd"/>
</dbReference>
<dbReference type="NCBIfam" id="TIGR01181">
    <property type="entry name" value="dTDP_gluc_dehyt"/>
    <property type="match status" value="1"/>
</dbReference>
<dbReference type="PANTHER" id="PTHR43000">
    <property type="entry name" value="DTDP-D-GLUCOSE 4,6-DEHYDRATASE-RELATED"/>
    <property type="match status" value="1"/>
</dbReference>
<dbReference type="Pfam" id="PF16363">
    <property type="entry name" value="GDP_Man_Dehyd"/>
    <property type="match status" value="1"/>
</dbReference>
<dbReference type="Pfam" id="PF04321">
    <property type="entry name" value="RmlD_sub_bind"/>
    <property type="match status" value="1"/>
</dbReference>
<dbReference type="SUPFAM" id="SSF51735">
    <property type="entry name" value="NAD(P)-binding Rossmann-fold domains"/>
    <property type="match status" value="2"/>
</dbReference>